<reference key="1">
    <citation type="submission" date="2007-03" db="EMBL/GenBank/DDBJ databases">
        <title>Complete sequence of Shewanella loihica PV-4.</title>
        <authorList>
            <consortium name="US DOE Joint Genome Institute"/>
            <person name="Copeland A."/>
            <person name="Lucas S."/>
            <person name="Lapidus A."/>
            <person name="Barry K."/>
            <person name="Detter J.C."/>
            <person name="Glavina del Rio T."/>
            <person name="Hammon N."/>
            <person name="Israni S."/>
            <person name="Dalin E."/>
            <person name="Tice H."/>
            <person name="Pitluck S."/>
            <person name="Chain P."/>
            <person name="Malfatti S."/>
            <person name="Shin M."/>
            <person name="Vergez L."/>
            <person name="Schmutz J."/>
            <person name="Larimer F."/>
            <person name="Land M."/>
            <person name="Hauser L."/>
            <person name="Kyrpides N."/>
            <person name="Mikhailova N."/>
            <person name="Romine M.F."/>
            <person name="Serres G."/>
            <person name="Fredrickson J."/>
            <person name="Tiedje J."/>
            <person name="Richardson P."/>
        </authorList>
    </citation>
    <scope>NUCLEOTIDE SEQUENCE [LARGE SCALE GENOMIC DNA]</scope>
    <source>
        <strain>ATCC BAA-1088 / PV-4</strain>
    </source>
</reference>
<protein>
    <recommendedName>
        <fullName evidence="1">Membrane-bound lytic murein transglycosylase F</fullName>
        <ecNumber evidence="1">4.2.2.n1</ecNumber>
    </recommendedName>
    <alternativeName>
        <fullName evidence="1">Murein lyase F</fullName>
    </alternativeName>
</protein>
<sequence>MRSFLLILFCVSLLTGCQGERVDAAKAVETQPKTQLNVGTLYGAQIYVTTGQGLAGFDYEMAERFAKHQGLTLNMQPYPTISDLYQAMRNGEIDLIAAGLADTQSRREQFRLGPPLYYVNQVLVYKQGAKYPTDVSQLDDNITVISDSSFIETLAEMQKLYPELVWDQQWDKDSEELLAMIARDEISYTIADSTTFEINRRYMPELRAGPVLREGQAVVWLLPPNGSDQLMSDLLSFWHQEKRAGTLAHLNEKYFAHVKRFDYVDTRAFLRAIDSRLPKYRDNFVEYAGDLDWRKLAATAYQESHWNPNARSPTGVRGMMMLTLPTAKQMGIDNRLDPEQSIRGGAKYLSDILNRLPESIPENQRMWFALASYNIGYGHVEDARKLAQSMGLNPSAWRDLKKVLPLLQKRKYYKQTRYGYARGSEAVHYVDNIRRYYDTLVWIDNQNQQLQDEVMEAQQQTAEKQSQSEISAAQPN</sequence>
<dbReference type="EC" id="4.2.2.n1" evidence="1"/>
<dbReference type="EMBL" id="CP000606">
    <property type="protein sequence ID" value="ABO23170.1"/>
    <property type="molecule type" value="Genomic_DNA"/>
</dbReference>
<dbReference type="RefSeq" id="WP_011865102.1">
    <property type="nucleotide sequence ID" value="NC_009092.1"/>
</dbReference>
<dbReference type="SMR" id="A3QCH2"/>
<dbReference type="STRING" id="323850.Shew_1300"/>
<dbReference type="CAZy" id="GH23">
    <property type="family name" value="Glycoside Hydrolase Family 23"/>
</dbReference>
<dbReference type="KEGG" id="slo:Shew_1300"/>
<dbReference type="eggNOG" id="COG4623">
    <property type="taxonomic scope" value="Bacteria"/>
</dbReference>
<dbReference type="HOGENOM" id="CLU_027494_0_1_6"/>
<dbReference type="OrthoDB" id="9815002at2"/>
<dbReference type="Proteomes" id="UP000001558">
    <property type="component" value="Chromosome"/>
</dbReference>
<dbReference type="GO" id="GO:0009279">
    <property type="term" value="C:cell outer membrane"/>
    <property type="evidence" value="ECO:0007669"/>
    <property type="project" value="UniProtKB-SubCell"/>
</dbReference>
<dbReference type="GO" id="GO:0008933">
    <property type="term" value="F:peptidoglycan lytic transglycosylase activity"/>
    <property type="evidence" value="ECO:0007669"/>
    <property type="project" value="UniProtKB-UniRule"/>
</dbReference>
<dbReference type="GO" id="GO:0016998">
    <property type="term" value="P:cell wall macromolecule catabolic process"/>
    <property type="evidence" value="ECO:0007669"/>
    <property type="project" value="UniProtKB-UniRule"/>
</dbReference>
<dbReference type="GO" id="GO:0071555">
    <property type="term" value="P:cell wall organization"/>
    <property type="evidence" value="ECO:0007669"/>
    <property type="project" value="UniProtKB-KW"/>
</dbReference>
<dbReference type="GO" id="GO:0009253">
    <property type="term" value="P:peptidoglycan catabolic process"/>
    <property type="evidence" value="ECO:0007669"/>
    <property type="project" value="TreeGrafter"/>
</dbReference>
<dbReference type="CDD" id="cd13403">
    <property type="entry name" value="MLTF-like"/>
    <property type="match status" value="1"/>
</dbReference>
<dbReference type="CDD" id="cd01009">
    <property type="entry name" value="PBP2_YfhD_N"/>
    <property type="match status" value="1"/>
</dbReference>
<dbReference type="FunFam" id="1.10.530.10:FF:000003">
    <property type="entry name" value="Membrane-bound lytic murein transglycosylase F"/>
    <property type="match status" value="1"/>
</dbReference>
<dbReference type="Gene3D" id="1.10.530.10">
    <property type="match status" value="1"/>
</dbReference>
<dbReference type="Gene3D" id="3.40.190.10">
    <property type="entry name" value="Periplasmic binding protein-like II"/>
    <property type="match status" value="2"/>
</dbReference>
<dbReference type="HAMAP" id="MF_02016">
    <property type="entry name" value="MltF"/>
    <property type="match status" value="1"/>
</dbReference>
<dbReference type="InterPro" id="IPR023346">
    <property type="entry name" value="Lysozyme-like_dom_sf"/>
</dbReference>
<dbReference type="InterPro" id="IPR023703">
    <property type="entry name" value="MltF"/>
</dbReference>
<dbReference type="InterPro" id="IPR001638">
    <property type="entry name" value="Solute-binding_3/MltF_N"/>
</dbReference>
<dbReference type="InterPro" id="IPR008258">
    <property type="entry name" value="Transglycosylase_SLT_dom_1"/>
</dbReference>
<dbReference type="NCBIfam" id="NF008112">
    <property type="entry name" value="PRK10859.1"/>
    <property type="match status" value="1"/>
</dbReference>
<dbReference type="PANTHER" id="PTHR35936">
    <property type="entry name" value="MEMBRANE-BOUND LYTIC MUREIN TRANSGLYCOSYLASE F"/>
    <property type="match status" value="1"/>
</dbReference>
<dbReference type="PANTHER" id="PTHR35936:SF32">
    <property type="entry name" value="MEMBRANE-BOUND LYTIC MUREIN TRANSGLYCOSYLASE F"/>
    <property type="match status" value="1"/>
</dbReference>
<dbReference type="Pfam" id="PF00497">
    <property type="entry name" value="SBP_bac_3"/>
    <property type="match status" value="1"/>
</dbReference>
<dbReference type="Pfam" id="PF01464">
    <property type="entry name" value="SLT"/>
    <property type="match status" value="1"/>
</dbReference>
<dbReference type="SMART" id="SM00062">
    <property type="entry name" value="PBPb"/>
    <property type="match status" value="1"/>
</dbReference>
<dbReference type="SUPFAM" id="SSF53955">
    <property type="entry name" value="Lysozyme-like"/>
    <property type="match status" value="1"/>
</dbReference>
<dbReference type="SUPFAM" id="SSF53850">
    <property type="entry name" value="Periplasmic binding protein-like II"/>
    <property type="match status" value="1"/>
</dbReference>
<dbReference type="PROSITE" id="PS51257">
    <property type="entry name" value="PROKAR_LIPOPROTEIN"/>
    <property type="match status" value="1"/>
</dbReference>
<keyword id="KW-0998">Cell outer membrane</keyword>
<keyword id="KW-0961">Cell wall biogenesis/degradation</keyword>
<keyword id="KW-0456">Lyase</keyword>
<keyword id="KW-0472">Membrane</keyword>
<keyword id="KW-1185">Reference proteome</keyword>
<keyword id="KW-0732">Signal</keyword>
<gene>
    <name evidence="1" type="primary">mltF</name>
    <name type="ordered locus">Shew_1300</name>
</gene>
<comment type="function">
    <text evidence="1">Murein-degrading enzyme that degrades murein glycan strands and insoluble, high-molecular weight murein sacculi, with the concomitant formation of a 1,6-anhydromuramoyl product. Lytic transglycosylases (LTs) play an integral role in the metabolism of the peptidoglycan (PG) sacculus. Their lytic action creates space within the PG sacculus to allow for its expansion as well as for the insertion of various structures such as secretion systems and flagella.</text>
</comment>
<comment type="catalytic activity">
    <reaction evidence="1">
        <text>Exolytic cleavage of the (1-&gt;4)-beta-glycosidic linkage between N-acetylmuramic acid (MurNAc) and N-acetylglucosamine (GlcNAc) residues in peptidoglycan, from either the reducing or the non-reducing ends of the peptidoglycan chains, with concomitant formation of a 1,6-anhydrobond in the MurNAc residue.</text>
        <dbReference type="EC" id="4.2.2.n1"/>
    </reaction>
</comment>
<comment type="subcellular location">
    <subcellularLocation>
        <location>Cell outer membrane</location>
        <topology>Peripheral membrane protein</topology>
    </subcellularLocation>
    <text evidence="1">Attached to the inner leaflet of the outer membrane.</text>
</comment>
<comment type="domain">
    <text evidence="1">The N-terminal domain does not have lytic activity and probably modulates enzymatic activity. The C-terminal domain is the catalytic active domain.</text>
</comment>
<comment type="similarity">
    <text evidence="1">In the N-terminal section; belongs to the bacterial solute-binding protein 3 family.</text>
</comment>
<comment type="similarity">
    <text evidence="1">In the C-terminal section; belongs to the transglycosylase Slt family.</text>
</comment>
<evidence type="ECO:0000255" key="1">
    <source>
        <dbReference type="HAMAP-Rule" id="MF_02016"/>
    </source>
</evidence>
<evidence type="ECO:0000256" key="2">
    <source>
        <dbReference type="SAM" id="MobiDB-lite"/>
    </source>
</evidence>
<organism>
    <name type="scientific">Shewanella loihica (strain ATCC BAA-1088 / PV-4)</name>
    <dbReference type="NCBI Taxonomy" id="323850"/>
    <lineage>
        <taxon>Bacteria</taxon>
        <taxon>Pseudomonadati</taxon>
        <taxon>Pseudomonadota</taxon>
        <taxon>Gammaproteobacteria</taxon>
        <taxon>Alteromonadales</taxon>
        <taxon>Shewanellaceae</taxon>
        <taxon>Shewanella</taxon>
    </lineage>
</organism>
<feature type="signal peptide" evidence="1">
    <location>
        <begin position="1"/>
        <end position="15"/>
    </location>
</feature>
<feature type="chain" id="PRO_5000229072" description="Membrane-bound lytic murein transglycosylase F">
    <location>
        <begin position="16"/>
        <end position="476"/>
    </location>
</feature>
<feature type="region of interest" description="Non-LT domain" evidence="1">
    <location>
        <begin position="16"/>
        <end position="258"/>
    </location>
</feature>
<feature type="region of interest" description="LT domain" evidence="1">
    <location>
        <begin position="259"/>
        <end position="476"/>
    </location>
</feature>
<feature type="region of interest" description="Disordered" evidence="2">
    <location>
        <begin position="456"/>
        <end position="476"/>
    </location>
</feature>
<feature type="active site" evidence="1">
    <location>
        <position position="303"/>
    </location>
</feature>
<proteinExistence type="inferred from homology"/>
<accession>A3QCH2</accession>
<name>MLTF_SHELP</name>